<dbReference type="EC" id="3.4.21.4"/>
<dbReference type="EMBL" id="X53458">
    <property type="protein sequence ID" value="CAA37538.1"/>
    <property type="molecule type" value="mRNA"/>
</dbReference>
<dbReference type="PIR" id="A35871">
    <property type="entry name" value="A35871"/>
</dbReference>
<dbReference type="SMR" id="P19799"/>
<dbReference type="MEROPS" id="S01.126"/>
<dbReference type="Proteomes" id="UP000186698">
    <property type="component" value="Unplaced"/>
</dbReference>
<dbReference type="GO" id="GO:0005615">
    <property type="term" value="C:extracellular space"/>
    <property type="evidence" value="ECO:0000318"/>
    <property type="project" value="GO_Central"/>
</dbReference>
<dbReference type="GO" id="GO:0046872">
    <property type="term" value="F:metal ion binding"/>
    <property type="evidence" value="ECO:0007669"/>
    <property type="project" value="UniProtKB-KW"/>
</dbReference>
<dbReference type="GO" id="GO:0004252">
    <property type="term" value="F:serine-type endopeptidase activity"/>
    <property type="evidence" value="ECO:0000318"/>
    <property type="project" value="GO_Central"/>
</dbReference>
<dbReference type="GO" id="GO:0007586">
    <property type="term" value="P:digestion"/>
    <property type="evidence" value="ECO:0007669"/>
    <property type="project" value="UniProtKB-KW"/>
</dbReference>
<dbReference type="GO" id="GO:0006508">
    <property type="term" value="P:proteolysis"/>
    <property type="evidence" value="ECO:0007669"/>
    <property type="project" value="UniProtKB-KW"/>
</dbReference>
<dbReference type="CDD" id="cd00190">
    <property type="entry name" value="Tryp_SPc"/>
    <property type="match status" value="1"/>
</dbReference>
<dbReference type="FunFam" id="2.40.10.10:FF:000008">
    <property type="entry name" value="Cationic trypsin"/>
    <property type="match status" value="1"/>
</dbReference>
<dbReference type="FunFam" id="2.40.10.10:FF:000005">
    <property type="entry name" value="Serine protease 37"/>
    <property type="match status" value="1"/>
</dbReference>
<dbReference type="Gene3D" id="2.40.10.10">
    <property type="entry name" value="Trypsin-like serine proteases"/>
    <property type="match status" value="2"/>
</dbReference>
<dbReference type="InterPro" id="IPR009003">
    <property type="entry name" value="Peptidase_S1_PA"/>
</dbReference>
<dbReference type="InterPro" id="IPR043504">
    <property type="entry name" value="Peptidase_S1_PA_chymotrypsin"/>
</dbReference>
<dbReference type="InterPro" id="IPR001314">
    <property type="entry name" value="Peptidase_S1A"/>
</dbReference>
<dbReference type="InterPro" id="IPR050127">
    <property type="entry name" value="Serine_Proteases_S1"/>
</dbReference>
<dbReference type="InterPro" id="IPR001254">
    <property type="entry name" value="Trypsin_dom"/>
</dbReference>
<dbReference type="InterPro" id="IPR018114">
    <property type="entry name" value="TRYPSIN_HIS"/>
</dbReference>
<dbReference type="InterPro" id="IPR033116">
    <property type="entry name" value="TRYPSIN_SER"/>
</dbReference>
<dbReference type="PANTHER" id="PTHR24264:SF75">
    <property type="entry name" value="TRYPSIN"/>
    <property type="match status" value="1"/>
</dbReference>
<dbReference type="PANTHER" id="PTHR24264">
    <property type="entry name" value="TRYPSIN-RELATED"/>
    <property type="match status" value="1"/>
</dbReference>
<dbReference type="Pfam" id="PF00089">
    <property type="entry name" value="Trypsin"/>
    <property type="match status" value="1"/>
</dbReference>
<dbReference type="PRINTS" id="PR00722">
    <property type="entry name" value="CHYMOTRYPSIN"/>
</dbReference>
<dbReference type="SMART" id="SM00020">
    <property type="entry name" value="Tryp_SPc"/>
    <property type="match status" value="1"/>
</dbReference>
<dbReference type="SUPFAM" id="SSF50494">
    <property type="entry name" value="Trypsin-like serine proteases"/>
    <property type="match status" value="1"/>
</dbReference>
<dbReference type="PROSITE" id="PS50240">
    <property type="entry name" value="TRYPSIN_DOM"/>
    <property type="match status" value="1"/>
</dbReference>
<dbReference type="PROSITE" id="PS00134">
    <property type="entry name" value="TRYPSIN_HIS"/>
    <property type="match status" value="1"/>
</dbReference>
<dbReference type="PROSITE" id="PS00135">
    <property type="entry name" value="TRYPSIN_SER"/>
    <property type="match status" value="1"/>
</dbReference>
<organism>
    <name type="scientific">Xenopus laevis</name>
    <name type="common">African clawed frog</name>
    <dbReference type="NCBI Taxonomy" id="8355"/>
    <lineage>
        <taxon>Eukaryota</taxon>
        <taxon>Metazoa</taxon>
        <taxon>Chordata</taxon>
        <taxon>Craniata</taxon>
        <taxon>Vertebrata</taxon>
        <taxon>Euteleostomi</taxon>
        <taxon>Amphibia</taxon>
        <taxon>Batrachia</taxon>
        <taxon>Anura</taxon>
        <taxon>Pipoidea</taxon>
        <taxon>Pipidae</taxon>
        <taxon>Xenopodinae</taxon>
        <taxon>Xenopus</taxon>
        <taxon>Xenopus</taxon>
    </lineage>
</organism>
<accession>P19799</accession>
<name>TRY1_XENLA</name>
<comment type="catalytic activity">
    <reaction>
        <text>Preferential cleavage: Arg-|-Xaa, Lys-|-Xaa.</text>
        <dbReference type="EC" id="3.4.21.4"/>
    </reaction>
</comment>
<comment type="cofactor">
    <cofactor evidence="1">
        <name>Ca(2+)</name>
        <dbReference type="ChEBI" id="CHEBI:29108"/>
    </cofactor>
    <text evidence="1">Binds 1 Ca(2+) ion per subunit.</text>
</comment>
<comment type="subcellular location">
    <subcellularLocation>
        <location>Secreted</location>
        <location>Extracellular space</location>
    </subcellularLocation>
</comment>
<comment type="similarity">
    <text evidence="2">Belongs to the peptidase S1 family.</text>
</comment>
<sequence>MKFLLLCVLLGAAAAFDDDKIIGGATCAKSSVPYIVSLNSGYHFCGGSLITNQWVVSAAHCYKASIQVRLGEHNIALSEGTEQFISSSKVIRHSGYNSYTLDNDIMLIKLSSPASLNAAVNTVPLPSGCSAAGTSCLISGWGNTLSNGSNYPDLLQCLNAPILTNAQCNSAYPGEITANMICVGYMEGGKDSCQGDSGGPVVCNGQLQGVVSWGYGCAMRNYPGVYTKVCNYNAWIQNTIAAN</sequence>
<protein>
    <recommendedName>
        <fullName>Trypsin</fullName>
        <ecNumber>3.4.21.4</ecNumber>
    </recommendedName>
</protein>
<feature type="signal peptide" evidence="1">
    <location>
        <begin position="1"/>
        <end position="15"/>
    </location>
</feature>
<feature type="propeptide" id="PRO_0000028233" description="Activation peptide">
    <location>
        <begin position="16"/>
        <end position="20"/>
    </location>
</feature>
<feature type="chain" id="PRO_0000028234" description="Trypsin">
    <location>
        <begin position="21"/>
        <end position="243"/>
    </location>
</feature>
<feature type="domain" description="Peptidase S1" evidence="2">
    <location>
        <begin position="21"/>
        <end position="241"/>
    </location>
</feature>
<feature type="active site" description="Charge relay system" evidence="1">
    <location>
        <position position="60"/>
    </location>
</feature>
<feature type="active site" description="Charge relay system" evidence="1">
    <location>
        <position position="104"/>
    </location>
</feature>
<feature type="active site" description="Charge relay system" evidence="1">
    <location>
        <position position="197"/>
    </location>
</feature>
<feature type="binding site" evidence="1">
    <location>
        <position position="72"/>
    </location>
    <ligand>
        <name>Ca(2+)</name>
        <dbReference type="ChEBI" id="CHEBI:29108"/>
    </ligand>
</feature>
<feature type="binding site" evidence="1">
    <location>
        <position position="74"/>
    </location>
    <ligand>
        <name>Ca(2+)</name>
        <dbReference type="ChEBI" id="CHEBI:29108"/>
    </ligand>
</feature>
<feature type="binding site" evidence="1">
    <location>
        <position position="82"/>
    </location>
    <ligand>
        <name>Ca(2+)</name>
        <dbReference type="ChEBI" id="CHEBI:29108"/>
    </ligand>
</feature>
<feature type="site" description="Required for specificity" evidence="1">
    <location>
        <position position="191"/>
    </location>
</feature>
<feature type="disulfide bond" evidence="2">
    <location>
        <begin position="27"/>
        <end position="157"/>
    </location>
</feature>
<feature type="disulfide bond" evidence="2">
    <location>
        <begin position="45"/>
        <end position="61"/>
    </location>
</feature>
<feature type="disulfide bond" evidence="2">
    <location>
        <begin position="129"/>
        <end position="230"/>
    </location>
</feature>
<feature type="disulfide bond" evidence="2">
    <location>
        <begin position="136"/>
        <end position="203"/>
    </location>
</feature>
<feature type="disulfide bond" evidence="2">
    <location>
        <begin position="168"/>
        <end position="182"/>
    </location>
</feature>
<feature type="disulfide bond" evidence="2">
    <location>
        <begin position="193"/>
        <end position="217"/>
    </location>
</feature>
<proteinExistence type="evidence at transcript level"/>
<evidence type="ECO:0000250" key="1"/>
<evidence type="ECO:0000255" key="2">
    <source>
        <dbReference type="PROSITE-ProRule" id="PRU00274"/>
    </source>
</evidence>
<reference key="1">
    <citation type="journal article" date="1990" name="Genes Dev.">
        <title>Developmental and thyroid hormone-dependent regulation of pancreatic genes in Xenopus laevis.</title>
        <authorList>
            <person name="Shi Y.B."/>
            <person name="Brown D.D."/>
        </authorList>
    </citation>
    <scope>NUCLEOTIDE SEQUENCE [MRNA]</scope>
    <source>
        <tissue>Pancreas</tissue>
    </source>
</reference>
<keyword id="KW-0106">Calcium</keyword>
<keyword id="KW-0222">Digestion</keyword>
<keyword id="KW-1015">Disulfide bond</keyword>
<keyword id="KW-0378">Hydrolase</keyword>
<keyword id="KW-0479">Metal-binding</keyword>
<keyword id="KW-0645">Protease</keyword>
<keyword id="KW-1185">Reference proteome</keyword>
<keyword id="KW-0964">Secreted</keyword>
<keyword id="KW-0720">Serine protease</keyword>
<keyword id="KW-0732">Signal</keyword>
<keyword id="KW-0865">Zymogen</keyword>